<reference key="1">
    <citation type="journal article" date="2003" name="Genome Res.">
        <title>Genome sequence of an M3 strain of Streptococcus pyogenes reveals a large-scale genomic rearrangement in invasive strains and new insights into phage evolution.</title>
        <authorList>
            <person name="Nakagawa I."/>
            <person name="Kurokawa K."/>
            <person name="Yamashita A."/>
            <person name="Nakata M."/>
            <person name="Tomiyasu Y."/>
            <person name="Okahashi N."/>
            <person name="Kawabata S."/>
            <person name="Yamazaki K."/>
            <person name="Shiba T."/>
            <person name="Yasunaga T."/>
            <person name="Hayashi H."/>
            <person name="Hattori M."/>
            <person name="Hamada S."/>
        </authorList>
    </citation>
    <scope>NUCLEOTIDE SEQUENCE [LARGE SCALE GENOMIC DNA]</scope>
    <source>
        <strain>SSI-1</strain>
    </source>
</reference>
<evidence type="ECO:0000255" key="1">
    <source>
        <dbReference type="HAMAP-Rule" id="MF_00537"/>
    </source>
</evidence>
<evidence type="ECO:0000256" key="2">
    <source>
        <dbReference type="SAM" id="MobiDB-lite"/>
    </source>
</evidence>
<evidence type="ECO:0000305" key="3"/>
<name>RS14_STRPQ</name>
<feature type="chain" id="PRO_0000411525" description="Small ribosomal subunit protein uS14A">
    <location>
        <begin position="1"/>
        <end position="89"/>
    </location>
</feature>
<feature type="region of interest" description="Disordered" evidence="2">
    <location>
        <begin position="34"/>
        <end position="54"/>
    </location>
</feature>
<keyword id="KW-0687">Ribonucleoprotein</keyword>
<keyword id="KW-0689">Ribosomal protein</keyword>
<keyword id="KW-0694">RNA-binding</keyword>
<keyword id="KW-0699">rRNA-binding</keyword>
<accession>P0DE71</accession>
<accession>P66425</accession>
<accession>Q99Y47</accession>
<dbReference type="EMBL" id="BA000034">
    <property type="protein sequence ID" value="BAC63347.1"/>
    <property type="molecule type" value="Genomic_DNA"/>
</dbReference>
<dbReference type="RefSeq" id="WP_002982921.1">
    <property type="nucleotide sequence ID" value="NC_004606.1"/>
</dbReference>
<dbReference type="SMR" id="P0DE71"/>
<dbReference type="GeneID" id="69900252"/>
<dbReference type="KEGG" id="sps:SPs0252"/>
<dbReference type="HOGENOM" id="CLU_139869_0_0_9"/>
<dbReference type="GO" id="GO:0005737">
    <property type="term" value="C:cytoplasm"/>
    <property type="evidence" value="ECO:0007669"/>
    <property type="project" value="UniProtKB-ARBA"/>
</dbReference>
<dbReference type="GO" id="GO:0015935">
    <property type="term" value="C:small ribosomal subunit"/>
    <property type="evidence" value="ECO:0007669"/>
    <property type="project" value="TreeGrafter"/>
</dbReference>
<dbReference type="GO" id="GO:0019843">
    <property type="term" value="F:rRNA binding"/>
    <property type="evidence" value="ECO:0007669"/>
    <property type="project" value="UniProtKB-UniRule"/>
</dbReference>
<dbReference type="GO" id="GO:0003735">
    <property type="term" value="F:structural constituent of ribosome"/>
    <property type="evidence" value="ECO:0007669"/>
    <property type="project" value="InterPro"/>
</dbReference>
<dbReference type="GO" id="GO:0006412">
    <property type="term" value="P:translation"/>
    <property type="evidence" value="ECO:0007669"/>
    <property type="project" value="UniProtKB-UniRule"/>
</dbReference>
<dbReference type="Gene3D" id="4.10.830.10">
    <property type="entry name" value="30s Ribosomal Protein S14, Chain N"/>
    <property type="match status" value="1"/>
</dbReference>
<dbReference type="HAMAP" id="MF_00537">
    <property type="entry name" value="Ribosomal_uS14_1"/>
    <property type="match status" value="1"/>
</dbReference>
<dbReference type="InterPro" id="IPR001209">
    <property type="entry name" value="Ribosomal_uS14"/>
</dbReference>
<dbReference type="InterPro" id="IPR023036">
    <property type="entry name" value="Ribosomal_uS14_bac/plastid"/>
</dbReference>
<dbReference type="InterPro" id="IPR043140">
    <property type="entry name" value="Ribosomal_uS14_sf"/>
</dbReference>
<dbReference type="NCBIfam" id="NF006477">
    <property type="entry name" value="PRK08881.1"/>
    <property type="match status" value="1"/>
</dbReference>
<dbReference type="PANTHER" id="PTHR19836">
    <property type="entry name" value="30S RIBOSOMAL PROTEIN S14"/>
    <property type="match status" value="1"/>
</dbReference>
<dbReference type="PANTHER" id="PTHR19836:SF19">
    <property type="entry name" value="SMALL RIBOSOMAL SUBUNIT PROTEIN US14M"/>
    <property type="match status" value="1"/>
</dbReference>
<dbReference type="Pfam" id="PF00253">
    <property type="entry name" value="Ribosomal_S14"/>
    <property type="match status" value="1"/>
</dbReference>
<dbReference type="SUPFAM" id="SSF57716">
    <property type="entry name" value="Glucocorticoid receptor-like (DNA-binding domain)"/>
    <property type="match status" value="1"/>
</dbReference>
<gene>
    <name evidence="1" type="primary">rpsN</name>
    <name type="synonym">rpsN.2</name>
    <name type="synonym">rpsN2</name>
    <name type="synonym">rs14</name>
    <name type="ordered locus">SPs0252</name>
</gene>
<organism>
    <name type="scientific">Streptococcus pyogenes serotype M3 (strain SSI-1)</name>
    <dbReference type="NCBI Taxonomy" id="193567"/>
    <lineage>
        <taxon>Bacteria</taxon>
        <taxon>Bacillati</taxon>
        <taxon>Bacillota</taxon>
        <taxon>Bacilli</taxon>
        <taxon>Lactobacillales</taxon>
        <taxon>Streptococcaceae</taxon>
        <taxon>Streptococcus</taxon>
    </lineage>
</organism>
<sequence>MAKKSKIAKYQKQLQLIEQYADLRRDLKAKGDYESLRKLPRDSNPNRLKNRDKIDGRPHAYMRKFGVSRINFRDLAHKGQLPGVTKASW</sequence>
<proteinExistence type="inferred from homology"/>
<comment type="function">
    <text evidence="1">Binds 16S rRNA, required for the assembly of 30S particles and may also be responsible for determining the conformation of the 16S rRNA at the A site.</text>
</comment>
<comment type="subunit">
    <text evidence="1">Part of the 30S ribosomal subunit. Contacts proteins S3 and S10.</text>
</comment>
<comment type="similarity">
    <text evidence="1">Belongs to the universal ribosomal protein uS14 family.</text>
</comment>
<protein>
    <recommendedName>
        <fullName evidence="1">Small ribosomal subunit protein uS14A</fullName>
    </recommendedName>
    <alternativeName>
        <fullName evidence="3">30S ribosomal protein S14</fullName>
    </alternativeName>
</protein>